<keyword id="KW-0687">Ribonucleoprotein</keyword>
<keyword id="KW-0689">Ribosomal protein</keyword>
<keyword id="KW-0694">RNA-binding</keyword>
<keyword id="KW-0699">rRNA-binding</keyword>
<gene>
    <name evidence="1" type="primary">rplX</name>
    <name type="ordered locus">DMR_12310</name>
</gene>
<sequence length="107" mass="11879">MKTYRIRKDDKVMVIAGKDKGKVGKILKILPKRNAVLVEKVNQVKRHTKANPYAKTPGGIIEKEAPLDISNVALLCEGCAKPAKVGYKYTADGKKVRFCKKCNHEIA</sequence>
<feature type="chain" id="PRO_1000214539" description="Large ribosomal subunit protein uL24">
    <location>
        <begin position="1"/>
        <end position="107"/>
    </location>
</feature>
<reference key="1">
    <citation type="journal article" date="2009" name="Genome Res.">
        <title>Whole genome sequence of Desulfovibrio magneticus strain RS-1 revealed common gene clusters in magnetotactic bacteria.</title>
        <authorList>
            <person name="Nakazawa H."/>
            <person name="Arakaki A."/>
            <person name="Narita-Yamada S."/>
            <person name="Yashiro I."/>
            <person name="Jinno K."/>
            <person name="Aoki N."/>
            <person name="Tsuruyama A."/>
            <person name="Okamura Y."/>
            <person name="Tanikawa S."/>
            <person name="Fujita N."/>
            <person name="Takeyama H."/>
            <person name="Matsunaga T."/>
        </authorList>
    </citation>
    <scope>NUCLEOTIDE SEQUENCE [LARGE SCALE GENOMIC DNA]</scope>
    <source>
        <strain>ATCC 700980 / DSM 13731 / RS-1</strain>
    </source>
</reference>
<protein>
    <recommendedName>
        <fullName evidence="1">Large ribosomal subunit protein uL24</fullName>
    </recommendedName>
    <alternativeName>
        <fullName evidence="2">50S ribosomal protein L24</fullName>
    </alternativeName>
</protein>
<name>RL24_SOLM1</name>
<accession>C4XLY4</accession>
<evidence type="ECO:0000255" key="1">
    <source>
        <dbReference type="HAMAP-Rule" id="MF_01326"/>
    </source>
</evidence>
<evidence type="ECO:0000305" key="2"/>
<dbReference type="EMBL" id="AP010904">
    <property type="protein sequence ID" value="BAH74722.1"/>
    <property type="molecule type" value="Genomic_DNA"/>
</dbReference>
<dbReference type="RefSeq" id="WP_006920478.1">
    <property type="nucleotide sequence ID" value="NC_012796.1"/>
</dbReference>
<dbReference type="SMR" id="C4XLY4"/>
<dbReference type="STRING" id="573370.DMR_12310"/>
<dbReference type="KEGG" id="dma:DMR_12310"/>
<dbReference type="eggNOG" id="COG0198">
    <property type="taxonomic scope" value="Bacteria"/>
</dbReference>
<dbReference type="HOGENOM" id="CLU_093315_2_3_7"/>
<dbReference type="OrthoDB" id="9807419at2"/>
<dbReference type="Proteomes" id="UP000009071">
    <property type="component" value="Chromosome"/>
</dbReference>
<dbReference type="GO" id="GO:1990904">
    <property type="term" value="C:ribonucleoprotein complex"/>
    <property type="evidence" value="ECO:0007669"/>
    <property type="project" value="UniProtKB-KW"/>
</dbReference>
<dbReference type="GO" id="GO:0005840">
    <property type="term" value="C:ribosome"/>
    <property type="evidence" value="ECO:0007669"/>
    <property type="project" value="UniProtKB-KW"/>
</dbReference>
<dbReference type="GO" id="GO:0019843">
    <property type="term" value="F:rRNA binding"/>
    <property type="evidence" value="ECO:0007669"/>
    <property type="project" value="UniProtKB-UniRule"/>
</dbReference>
<dbReference type="GO" id="GO:0003735">
    <property type="term" value="F:structural constituent of ribosome"/>
    <property type="evidence" value="ECO:0007669"/>
    <property type="project" value="InterPro"/>
</dbReference>
<dbReference type="GO" id="GO:0006412">
    <property type="term" value="P:translation"/>
    <property type="evidence" value="ECO:0007669"/>
    <property type="project" value="UniProtKB-UniRule"/>
</dbReference>
<dbReference type="CDD" id="cd06089">
    <property type="entry name" value="KOW_RPL26"/>
    <property type="match status" value="1"/>
</dbReference>
<dbReference type="FunFam" id="2.30.30.30:FF:000004">
    <property type="entry name" value="50S ribosomal protein L24"/>
    <property type="match status" value="1"/>
</dbReference>
<dbReference type="Gene3D" id="2.30.30.30">
    <property type="match status" value="1"/>
</dbReference>
<dbReference type="HAMAP" id="MF_01326_B">
    <property type="entry name" value="Ribosomal_uL24_B"/>
    <property type="match status" value="1"/>
</dbReference>
<dbReference type="InterPro" id="IPR005824">
    <property type="entry name" value="KOW"/>
</dbReference>
<dbReference type="InterPro" id="IPR014722">
    <property type="entry name" value="Rib_uL2_dom2"/>
</dbReference>
<dbReference type="InterPro" id="IPR003256">
    <property type="entry name" value="Ribosomal_uL24"/>
</dbReference>
<dbReference type="InterPro" id="IPR005825">
    <property type="entry name" value="Ribosomal_uL24_CS"/>
</dbReference>
<dbReference type="InterPro" id="IPR041988">
    <property type="entry name" value="Ribosomal_uL24_KOW"/>
</dbReference>
<dbReference type="InterPro" id="IPR008991">
    <property type="entry name" value="Translation_prot_SH3-like_sf"/>
</dbReference>
<dbReference type="NCBIfam" id="TIGR01079">
    <property type="entry name" value="rplX_bact"/>
    <property type="match status" value="1"/>
</dbReference>
<dbReference type="PANTHER" id="PTHR12903">
    <property type="entry name" value="MITOCHONDRIAL RIBOSOMAL PROTEIN L24"/>
    <property type="match status" value="1"/>
</dbReference>
<dbReference type="Pfam" id="PF00467">
    <property type="entry name" value="KOW"/>
    <property type="match status" value="1"/>
</dbReference>
<dbReference type="Pfam" id="PF17136">
    <property type="entry name" value="ribosomal_L24"/>
    <property type="match status" value="1"/>
</dbReference>
<dbReference type="SMART" id="SM00739">
    <property type="entry name" value="KOW"/>
    <property type="match status" value="1"/>
</dbReference>
<dbReference type="SUPFAM" id="SSF50104">
    <property type="entry name" value="Translation proteins SH3-like domain"/>
    <property type="match status" value="1"/>
</dbReference>
<dbReference type="PROSITE" id="PS01108">
    <property type="entry name" value="RIBOSOMAL_L24"/>
    <property type="match status" value="1"/>
</dbReference>
<proteinExistence type="inferred from homology"/>
<comment type="function">
    <text evidence="1">One of two assembly initiator proteins, it binds directly to the 5'-end of the 23S rRNA, where it nucleates assembly of the 50S subunit.</text>
</comment>
<comment type="function">
    <text evidence="1">One of the proteins that surrounds the polypeptide exit tunnel on the outside of the subunit.</text>
</comment>
<comment type="subunit">
    <text evidence="1">Part of the 50S ribosomal subunit.</text>
</comment>
<comment type="similarity">
    <text evidence="1">Belongs to the universal ribosomal protein uL24 family.</text>
</comment>
<organism>
    <name type="scientific">Solidesulfovibrio magneticus (strain ATCC 700980 / DSM 13731 / RS-1)</name>
    <name type="common">Desulfovibrio magneticus</name>
    <dbReference type="NCBI Taxonomy" id="573370"/>
    <lineage>
        <taxon>Bacteria</taxon>
        <taxon>Pseudomonadati</taxon>
        <taxon>Thermodesulfobacteriota</taxon>
        <taxon>Desulfovibrionia</taxon>
        <taxon>Desulfovibrionales</taxon>
        <taxon>Desulfovibrionaceae</taxon>
        <taxon>Solidesulfovibrio</taxon>
    </lineage>
</organism>